<accession>A9A697</accession>
<feature type="chain" id="PRO_1000133409" description="Large ribosomal subunit protein eL34">
    <location>
        <begin position="1"/>
        <end position="89"/>
    </location>
</feature>
<evidence type="ECO:0000255" key="1">
    <source>
        <dbReference type="HAMAP-Rule" id="MF_00349"/>
    </source>
</evidence>
<evidence type="ECO:0000305" key="2"/>
<proteinExistence type="inferred from homology"/>
<name>RL34_METM6</name>
<sequence length="89" mass="9696">MSAPRYKSGSAKKVYKKAPGNSSIVHYRRKKQSNAVCGACGALLNGVPRGRAVEITKLAKTQKRPERAFGGNLCPKCVKKMMVAKARNF</sequence>
<keyword id="KW-0687">Ribonucleoprotein</keyword>
<keyword id="KW-0689">Ribosomal protein</keyword>
<dbReference type="EMBL" id="CP000867">
    <property type="protein sequence ID" value="ABX01085.1"/>
    <property type="molecule type" value="Genomic_DNA"/>
</dbReference>
<dbReference type="SMR" id="A9A697"/>
<dbReference type="STRING" id="444158.MmarC6_0264"/>
<dbReference type="KEGG" id="mmx:MmarC6_0264"/>
<dbReference type="eggNOG" id="arCOG04168">
    <property type="taxonomic scope" value="Archaea"/>
</dbReference>
<dbReference type="HOGENOM" id="CLU_118652_2_0_2"/>
<dbReference type="OrthoDB" id="43096at2157"/>
<dbReference type="PhylomeDB" id="A9A697"/>
<dbReference type="GO" id="GO:1990904">
    <property type="term" value="C:ribonucleoprotein complex"/>
    <property type="evidence" value="ECO:0007669"/>
    <property type="project" value="UniProtKB-KW"/>
</dbReference>
<dbReference type="GO" id="GO:0005840">
    <property type="term" value="C:ribosome"/>
    <property type="evidence" value="ECO:0007669"/>
    <property type="project" value="UniProtKB-KW"/>
</dbReference>
<dbReference type="GO" id="GO:0003735">
    <property type="term" value="F:structural constituent of ribosome"/>
    <property type="evidence" value="ECO:0007669"/>
    <property type="project" value="InterPro"/>
</dbReference>
<dbReference type="GO" id="GO:0006412">
    <property type="term" value="P:translation"/>
    <property type="evidence" value="ECO:0007669"/>
    <property type="project" value="UniProtKB-UniRule"/>
</dbReference>
<dbReference type="Gene3D" id="6.20.340.10">
    <property type="match status" value="1"/>
</dbReference>
<dbReference type="HAMAP" id="MF_00349">
    <property type="entry name" value="Ribosomal_eL34"/>
    <property type="match status" value="1"/>
</dbReference>
<dbReference type="InterPro" id="IPR008195">
    <property type="entry name" value="Ribosomal_eL34"/>
</dbReference>
<dbReference type="InterPro" id="IPR038562">
    <property type="entry name" value="Ribosomal_eL34_C_sf"/>
</dbReference>
<dbReference type="InterPro" id="IPR047868">
    <property type="entry name" value="Ribosomal_L34e_arc-type"/>
</dbReference>
<dbReference type="NCBIfam" id="NF003143">
    <property type="entry name" value="PRK04059.1"/>
    <property type="match status" value="1"/>
</dbReference>
<dbReference type="PANTHER" id="PTHR10759">
    <property type="entry name" value="60S RIBOSOMAL PROTEIN L34"/>
    <property type="match status" value="1"/>
</dbReference>
<dbReference type="Pfam" id="PF01199">
    <property type="entry name" value="Ribosomal_L34e"/>
    <property type="match status" value="1"/>
</dbReference>
<dbReference type="PRINTS" id="PR01250">
    <property type="entry name" value="RIBOSOMALL34"/>
</dbReference>
<gene>
    <name evidence="1" type="primary">rpl34e</name>
    <name type="ordered locus">MmarC6_0264</name>
</gene>
<comment type="similarity">
    <text evidence="1">Belongs to the eukaryotic ribosomal protein eL34 family.</text>
</comment>
<protein>
    <recommendedName>
        <fullName evidence="1">Large ribosomal subunit protein eL34</fullName>
    </recommendedName>
    <alternativeName>
        <fullName evidence="2">50S ribosomal protein L34e</fullName>
    </alternativeName>
</protein>
<organism>
    <name type="scientific">Methanococcus maripaludis (strain C6 / ATCC BAA-1332)</name>
    <dbReference type="NCBI Taxonomy" id="444158"/>
    <lineage>
        <taxon>Archaea</taxon>
        <taxon>Methanobacteriati</taxon>
        <taxon>Methanobacteriota</taxon>
        <taxon>Methanomada group</taxon>
        <taxon>Methanococci</taxon>
        <taxon>Methanococcales</taxon>
        <taxon>Methanococcaceae</taxon>
        <taxon>Methanococcus</taxon>
    </lineage>
</organism>
<reference key="1">
    <citation type="submission" date="2007-10" db="EMBL/GenBank/DDBJ databases">
        <title>Complete sequence of Methanococcus maripaludis C6.</title>
        <authorList>
            <consortium name="US DOE Joint Genome Institute"/>
            <person name="Copeland A."/>
            <person name="Lucas S."/>
            <person name="Lapidus A."/>
            <person name="Barry K."/>
            <person name="Glavina del Rio T."/>
            <person name="Dalin E."/>
            <person name="Tice H."/>
            <person name="Pitluck S."/>
            <person name="Clum A."/>
            <person name="Schmutz J."/>
            <person name="Larimer F."/>
            <person name="Land M."/>
            <person name="Hauser L."/>
            <person name="Kyrpides N."/>
            <person name="Mikhailova N."/>
            <person name="Sieprawska-Lupa M."/>
            <person name="Whitman W.B."/>
            <person name="Richardson P."/>
        </authorList>
    </citation>
    <scope>NUCLEOTIDE SEQUENCE [LARGE SCALE GENOMIC DNA]</scope>
    <source>
        <strain>C6 / ATCC BAA-1332</strain>
    </source>
</reference>